<feature type="chain" id="PRO_0000098713" description="Zinc finger FYVE domain-containing protein 1">
    <location>
        <begin position="1"/>
        <end position="777"/>
    </location>
</feature>
<feature type="zinc finger region" description="FYVE-type 1" evidence="1">
    <location>
        <begin position="598"/>
        <end position="659"/>
    </location>
</feature>
<feature type="zinc finger region" description="FYVE-type 2" evidence="1">
    <location>
        <begin position="715"/>
        <end position="775"/>
    </location>
</feature>
<feature type="region of interest" description="Required for localization in the lipid droplets" evidence="7 8">
    <location>
        <begin position="416"/>
        <end position="777"/>
    </location>
</feature>
<feature type="binding site" evidence="1">
    <location>
        <position position="604"/>
    </location>
    <ligand>
        <name>Zn(2+)</name>
        <dbReference type="ChEBI" id="CHEBI:29105"/>
        <label>1</label>
    </ligand>
</feature>
<feature type="binding site" evidence="1">
    <location>
        <position position="607"/>
    </location>
    <ligand>
        <name>Zn(2+)</name>
        <dbReference type="ChEBI" id="CHEBI:29105"/>
        <label>1</label>
    </ligand>
</feature>
<feature type="binding site" evidence="1">
    <location>
        <position position="620"/>
    </location>
    <ligand>
        <name>Zn(2+)</name>
        <dbReference type="ChEBI" id="CHEBI:29105"/>
        <label>2</label>
    </ligand>
</feature>
<feature type="binding site" evidence="1">
    <location>
        <position position="623"/>
    </location>
    <ligand>
        <name>Zn(2+)</name>
        <dbReference type="ChEBI" id="CHEBI:29105"/>
        <label>2</label>
    </ligand>
</feature>
<feature type="binding site" evidence="1">
    <location>
        <position position="628"/>
    </location>
    <ligand>
        <name>Zn(2+)</name>
        <dbReference type="ChEBI" id="CHEBI:29105"/>
        <label>1</label>
    </ligand>
</feature>
<feature type="binding site" evidence="1">
    <location>
        <position position="631"/>
    </location>
    <ligand>
        <name>Zn(2+)</name>
        <dbReference type="ChEBI" id="CHEBI:29105"/>
        <label>1</label>
    </ligand>
</feature>
<feature type="binding site" evidence="1">
    <location>
        <position position="651"/>
    </location>
    <ligand>
        <name>Zn(2+)</name>
        <dbReference type="ChEBI" id="CHEBI:29105"/>
        <label>2</label>
    </ligand>
</feature>
<feature type="binding site" evidence="1">
    <location>
        <position position="654"/>
    </location>
    <ligand>
        <name>Zn(2+)</name>
        <dbReference type="ChEBI" id="CHEBI:29105"/>
        <label>2</label>
    </ligand>
</feature>
<feature type="binding site" evidence="1">
    <location>
        <position position="721"/>
    </location>
    <ligand>
        <name>Zn(2+)</name>
        <dbReference type="ChEBI" id="CHEBI:29105"/>
        <label>3</label>
    </ligand>
</feature>
<feature type="binding site" evidence="1">
    <location>
        <position position="724"/>
    </location>
    <ligand>
        <name>Zn(2+)</name>
        <dbReference type="ChEBI" id="CHEBI:29105"/>
        <label>3</label>
    </ligand>
</feature>
<feature type="binding site" evidence="1">
    <location>
        <position position="737"/>
    </location>
    <ligand>
        <name>Zn(2+)</name>
        <dbReference type="ChEBI" id="CHEBI:29105"/>
        <label>4</label>
    </ligand>
</feature>
<feature type="binding site" evidence="1">
    <location>
        <position position="740"/>
    </location>
    <ligand>
        <name>Zn(2+)</name>
        <dbReference type="ChEBI" id="CHEBI:29105"/>
        <label>4</label>
    </ligand>
</feature>
<feature type="binding site" evidence="1">
    <location>
        <position position="745"/>
    </location>
    <ligand>
        <name>Zn(2+)</name>
        <dbReference type="ChEBI" id="CHEBI:29105"/>
        <label>3</label>
    </ligand>
</feature>
<feature type="binding site" evidence="1">
    <location>
        <position position="748"/>
    </location>
    <ligand>
        <name>Zn(2+)</name>
        <dbReference type="ChEBI" id="CHEBI:29105"/>
        <label>3</label>
    </ligand>
</feature>
<feature type="binding site" evidence="1">
    <location>
        <position position="767"/>
    </location>
    <ligand>
        <name>Zn(2+)</name>
        <dbReference type="ChEBI" id="CHEBI:29105"/>
        <label>4</label>
    </ligand>
</feature>
<feature type="binding site" evidence="1">
    <location>
        <position position="770"/>
    </location>
    <ligand>
        <name>Zn(2+)</name>
        <dbReference type="ChEBI" id="CHEBI:29105"/>
        <label>4</label>
    </ligand>
</feature>
<feature type="splice variant" id="VSP_008007" description="In isoform 2." evidence="11">
    <location>
        <begin position="1"/>
        <end position="415"/>
    </location>
</feature>
<feature type="splice variant" id="VSP_056770" description="In isoform 3." evidence="12">
    <location>
        <begin position="507"/>
        <end position="520"/>
    </location>
</feature>
<feature type="mutagenesis site" description="Disrupts its localization to lipid droplets." evidence="7">
    <original>W</original>
    <variation>A</variation>
    <location>
        <position position="543"/>
    </location>
</feature>
<feature type="mutagenesis site" description="Partially restore PtdIns3P binding; when associated with R-733." evidence="3">
    <original>T</original>
    <variation>R</variation>
    <location>
        <position position="616"/>
    </location>
</feature>
<feature type="mutagenesis site" description="Drastically reduce PtdIns3P binding; when associated with A-619 and A-621. Abolishes PtdIns3P binding; when associated with A-734; A-736 and A-738." evidence="3">
    <original>K</original>
    <variation>A</variation>
    <location>
        <position position="617"/>
    </location>
</feature>
<feature type="mutagenesis site" description="Drastically reduce PtdIns3P binding; when associated with A-617 and A-621. Abolishes PtdIns3P binding; when associated with A-734; A-736 and A-738." evidence="3">
    <original>H</original>
    <variation>A</variation>
    <location>
        <position position="619"/>
    </location>
</feature>
<feature type="mutagenesis site" description="Drastically reduce PtdIns3P binding; when associated with A-617 and A-619. Abolishes PtdIns3P binding; when associated with A-734; A-736 and A-738." evidence="3">
    <original>R</original>
    <variation>A</variation>
    <location>
        <position position="621"/>
    </location>
</feature>
<feature type="mutagenesis site" description="Abolishes PtdIns3P binding but has no effect on its localization to lipid droplets or its interaction with RAB18; when associated with S-770." evidence="3 7 8">
    <original>C</original>
    <variation>S</variation>
    <location>
        <position position="654"/>
    </location>
</feature>
<feature type="mutagenesis site" description="Partially restored PtdIns3P binding; when associated with R-616." evidence="3">
    <original>S</original>
    <variation>R</variation>
    <location>
        <position position="733"/>
    </location>
</feature>
<feature type="mutagenesis site" description="Drastically reduce PtdIns3P binding; when associated with A-736 and A-738. Abolishes PtdIns3P binding; when associated with A-617; A-619 and A-621." evidence="3">
    <original>K</original>
    <variation>A</variation>
    <location>
        <position position="734"/>
    </location>
</feature>
<feature type="mutagenesis site" description="Drastically reduce PtdIns3P binding; when associated with A-734 and A-738. Abolishes PtdIns3P binding; when associated with A-617; A-619 and A-621." evidence="3">
    <original>H</original>
    <variation>A</variation>
    <location>
        <position position="736"/>
    </location>
</feature>
<feature type="mutagenesis site" description="Drastically reduce PtdIns3P binding; when associated with A-734 and A-736. Abolishes PtdIns3P binding; when associated with A-617; A-619 and A-621." evidence="3">
    <original>R</original>
    <variation>A</variation>
    <location>
        <position position="738"/>
    </location>
</feature>
<feature type="mutagenesis site" description="Abolishes PtdIns3P binding but has no effect on its localization to lipid droplets or its interaction with RAB18; when associated with S-654." evidence="3 4 7 8">
    <original>C</original>
    <variation>S</variation>
    <location>
        <position position="770"/>
    </location>
</feature>
<feature type="sequence conflict" description="In Ref. 8; BC014902." evidence="13" ref="8">
    <original>V</original>
    <variation>M</variation>
    <location>
        <position position="120"/>
    </location>
</feature>
<keyword id="KW-0025">Alternative splicing</keyword>
<keyword id="KW-0256">Endoplasmic reticulum</keyword>
<keyword id="KW-0333">Golgi apparatus</keyword>
<keyword id="KW-0551">Lipid droplet</keyword>
<keyword id="KW-0479">Metal-binding</keyword>
<keyword id="KW-0496">Mitochondrion</keyword>
<keyword id="KW-1267">Proteomics identification</keyword>
<keyword id="KW-1185">Reference proteome</keyword>
<keyword id="KW-0677">Repeat</keyword>
<keyword id="KW-0862">Zinc</keyword>
<keyword id="KW-0863">Zinc-finger</keyword>
<proteinExistence type="evidence at protein level"/>
<reference key="1">
    <citation type="journal article" date="2000" name="Gene">
        <title>Double FYVE-containing protein 1 (DFCP1): isolation, cloning and characterization of a novel FYVE finger protein from a human bone marrow cDNA library.</title>
        <authorList>
            <person name="Derubeis A.R."/>
            <person name="Young M.F."/>
            <person name="Jia L."/>
            <person name="Robey P.G."/>
            <person name="Fisher L.W."/>
        </authorList>
    </citation>
    <scope>NUCLEOTIDE SEQUENCE [MRNA] (ISOFORM 1)</scope>
    <scope>TISSUE SPECIFICITY</scope>
    <scope>SUBCELLULAR LOCATION</scope>
    <source>
        <tissue>Bone marrow stroma</tissue>
    </source>
</reference>
<reference key="2">
    <citation type="journal article" date="2001" name="J. Cell Sci.">
        <title>FENS-1 and DFCP1 are FYVE domain-containing proteins with distinct functions in the endosomal and Golgi compartments.</title>
        <authorList>
            <person name="Ridley S.H."/>
            <person name="Ktistakis N."/>
            <person name="Davidson K."/>
            <person name="Anderson K.E."/>
            <person name="Manifava M."/>
            <person name="Ellson C.D."/>
            <person name="Lipp P."/>
            <person name="Bootman M."/>
            <person name="Coadwell J."/>
            <person name="Nazarian A."/>
            <person name="Erdjument-Bromage H."/>
            <person name="Tempst P."/>
            <person name="Cooper M.A."/>
            <person name="Thuring J.W.J.F."/>
            <person name="Lim Z.-Y."/>
            <person name="Holmes A.B."/>
            <person name="Stephens L.R."/>
            <person name="Hawkins P.T."/>
        </authorList>
    </citation>
    <scope>NUCLEOTIDE SEQUENCE [MRNA] (ISOFORM 1)</scope>
    <scope>FUNCTION</scope>
    <scope>SUBCELLULAR LOCATION</scope>
    <scope>MUTAGENESIS OF CYS-770</scope>
</reference>
<reference key="3">
    <citation type="journal article" date="2001" name="Biochem. J.">
        <title>Characterization of a novel phosphatidylinositol 3-phosphate-binding protein containing two FYVE fingers in tandem that is targeted to the Golgi.</title>
        <authorList>
            <person name="Cheung P.C.F."/>
            <person name="Trinkle-Mulcahy L."/>
            <person name="Cohen P."/>
            <person name="Lucocq J.M."/>
        </authorList>
    </citation>
    <scope>NUCLEOTIDE SEQUENCE [MRNA] (ISOFORM 2)</scope>
    <scope>FUNCTION</scope>
    <scope>SUBCELLULAR LOCATION</scope>
    <scope>MUTAGENESIS OF THR-616; LYS-617; HIS-619; ARG-621; CYS-654; SER-733; LYS-734; HIS-736; ARG-738 AND CYS-770</scope>
    <scope>TISSUE SPECIFICITY</scope>
</reference>
<reference key="4">
    <citation type="journal article" date="2000" name="DNA Res.">
        <title>Prediction of the coding sequences of unidentified human genes. XVIII. The complete sequences of 100 new cDNA clones from brain which code for large proteins in vitro.</title>
        <authorList>
            <person name="Nagase T."/>
            <person name="Kikuno R."/>
            <person name="Nakayama M."/>
            <person name="Hirosawa M."/>
            <person name="Ohara O."/>
        </authorList>
    </citation>
    <scope>NUCLEOTIDE SEQUENCE [LARGE SCALE MRNA] (ISOFORM 1)</scope>
    <source>
        <tissue>Brain</tissue>
    </source>
</reference>
<reference key="5">
    <citation type="journal article" date="2004" name="Nat. Genet.">
        <title>Complete sequencing and characterization of 21,243 full-length human cDNAs.</title>
        <authorList>
            <person name="Ota T."/>
            <person name="Suzuki Y."/>
            <person name="Nishikawa T."/>
            <person name="Otsuki T."/>
            <person name="Sugiyama T."/>
            <person name="Irie R."/>
            <person name="Wakamatsu A."/>
            <person name="Hayashi K."/>
            <person name="Sato H."/>
            <person name="Nagai K."/>
            <person name="Kimura K."/>
            <person name="Makita H."/>
            <person name="Sekine M."/>
            <person name="Obayashi M."/>
            <person name="Nishi T."/>
            <person name="Shibahara T."/>
            <person name="Tanaka T."/>
            <person name="Ishii S."/>
            <person name="Yamamoto J."/>
            <person name="Saito K."/>
            <person name="Kawai Y."/>
            <person name="Isono Y."/>
            <person name="Nakamura Y."/>
            <person name="Nagahari K."/>
            <person name="Murakami K."/>
            <person name="Yasuda T."/>
            <person name="Iwayanagi T."/>
            <person name="Wagatsuma M."/>
            <person name="Shiratori A."/>
            <person name="Sudo H."/>
            <person name="Hosoiri T."/>
            <person name="Kaku Y."/>
            <person name="Kodaira H."/>
            <person name="Kondo H."/>
            <person name="Sugawara M."/>
            <person name="Takahashi M."/>
            <person name="Kanda K."/>
            <person name="Yokoi T."/>
            <person name="Furuya T."/>
            <person name="Kikkawa E."/>
            <person name="Omura Y."/>
            <person name="Abe K."/>
            <person name="Kamihara K."/>
            <person name="Katsuta N."/>
            <person name="Sato K."/>
            <person name="Tanikawa M."/>
            <person name="Yamazaki M."/>
            <person name="Ninomiya K."/>
            <person name="Ishibashi T."/>
            <person name="Yamashita H."/>
            <person name="Murakawa K."/>
            <person name="Fujimori K."/>
            <person name="Tanai H."/>
            <person name="Kimata M."/>
            <person name="Watanabe M."/>
            <person name="Hiraoka S."/>
            <person name="Chiba Y."/>
            <person name="Ishida S."/>
            <person name="Ono Y."/>
            <person name="Takiguchi S."/>
            <person name="Watanabe S."/>
            <person name="Yosida M."/>
            <person name="Hotuta T."/>
            <person name="Kusano J."/>
            <person name="Kanehori K."/>
            <person name="Takahashi-Fujii A."/>
            <person name="Hara H."/>
            <person name="Tanase T.-O."/>
            <person name="Nomura Y."/>
            <person name="Togiya S."/>
            <person name="Komai F."/>
            <person name="Hara R."/>
            <person name="Takeuchi K."/>
            <person name="Arita M."/>
            <person name="Imose N."/>
            <person name="Musashino K."/>
            <person name="Yuuki H."/>
            <person name="Oshima A."/>
            <person name="Sasaki N."/>
            <person name="Aotsuka S."/>
            <person name="Yoshikawa Y."/>
            <person name="Matsunawa H."/>
            <person name="Ichihara T."/>
            <person name="Shiohata N."/>
            <person name="Sano S."/>
            <person name="Moriya S."/>
            <person name="Momiyama H."/>
            <person name="Satoh N."/>
            <person name="Takami S."/>
            <person name="Terashima Y."/>
            <person name="Suzuki O."/>
            <person name="Nakagawa S."/>
            <person name="Senoh A."/>
            <person name="Mizoguchi H."/>
            <person name="Goto Y."/>
            <person name="Shimizu F."/>
            <person name="Wakebe H."/>
            <person name="Hishigaki H."/>
            <person name="Watanabe T."/>
            <person name="Sugiyama A."/>
            <person name="Takemoto M."/>
            <person name="Kawakami B."/>
            <person name="Yamazaki M."/>
            <person name="Watanabe K."/>
            <person name="Kumagai A."/>
            <person name="Itakura S."/>
            <person name="Fukuzumi Y."/>
            <person name="Fujimori Y."/>
            <person name="Komiyama M."/>
            <person name="Tashiro H."/>
            <person name="Tanigami A."/>
            <person name="Fujiwara T."/>
            <person name="Ono T."/>
            <person name="Yamada K."/>
            <person name="Fujii Y."/>
            <person name="Ozaki K."/>
            <person name="Hirao M."/>
            <person name="Ohmori Y."/>
            <person name="Kawabata A."/>
            <person name="Hikiji T."/>
            <person name="Kobatake N."/>
            <person name="Inagaki H."/>
            <person name="Ikema Y."/>
            <person name="Okamoto S."/>
            <person name="Okitani R."/>
            <person name="Kawakami T."/>
            <person name="Noguchi S."/>
            <person name="Itoh T."/>
            <person name="Shigeta K."/>
            <person name="Senba T."/>
            <person name="Matsumura K."/>
            <person name="Nakajima Y."/>
            <person name="Mizuno T."/>
            <person name="Morinaga M."/>
            <person name="Sasaki M."/>
            <person name="Togashi T."/>
            <person name="Oyama M."/>
            <person name="Hata H."/>
            <person name="Watanabe M."/>
            <person name="Komatsu T."/>
            <person name="Mizushima-Sugano J."/>
            <person name="Satoh T."/>
            <person name="Shirai Y."/>
            <person name="Takahashi Y."/>
            <person name="Nakagawa K."/>
            <person name="Okumura K."/>
            <person name="Nagase T."/>
            <person name="Nomura N."/>
            <person name="Kikuchi H."/>
            <person name="Masuho Y."/>
            <person name="Yamashita R."/>
            <person name="Nakai K."/>
            <person name="Yada T."/>
            <person name="Nakamura Y."/>
            <person name="Ohara O."/>
            <person name="Isogai T."/>
            <person name="Sugano S."/>
        </authorList>
    </citation>
    <scope>NUCLEOTIDE SEQUENCE [LARGE SCALE MRNA] (ISOFORM 1)</scope>
    <source>
        <tissue>Mammary gland</tissue>
    </source>
</reference>
<reference key="6">
    <citation type="journal article" date="2003" name="Nature">
        <title>The DNA sequence and analysis of human chromosome 14.</title>
        <authorList>
            <person name="Heilig R."/>
            <person name="Eckenberg R."/>
            <person name="Petit J.-L."/>
            <person name="Fonknechten N."/>
            <person name="Da Silva C."/>
            <person name="Cattolico L."/>
            <person name="Levy M."/>
            <person name="Barbe V."/>
            <person name="De Berardinis V."/>
            <person name="Ureta-Vidal A."/>
            <person name="Pelletier E."/>
            <person name="Vico V."/>
            <person name="Anthouard V."/>
            <person name="Rowen L."/>
            <person name="Madan A."/>
            <person name="Qin S."/>
            <person name="Sun H."/>
            <person name="Du H."/>
            <person name="Pepin K."/>
            <person name="Artiguenave F."/>
            <person name="Robert C."/>
            <person name="Cruaud C."/>
            <person name="Bruels T."/>
            <person name="Jaillon O."/>
            <person name="Friedlander L."/>
            <person name="Samson G."/>
            <person name="Brottier P."/>
            <person name="Cure S."/>
            <person name="Segurens B."/>
            <person name="Aniere F."/>
            <person name="Samain S."/>
            <person name="Crespeau H."/>
            <person name="Abbasi N."/>
            <person name="Aiach N."/>
            <person name="Boscus D."/>
            <person name="Dickhoff R."/>
            <person name="Dors M."/>
            <person name="Dubois I."/>
            <person name="Friedman C."/>
            <person name="Gouyvenoux M."/>
            <person name="James R."/>
            <person name="Madan A."/>
            <person name="Mairey-Estrada B."/>
            <person name="Mangenot S."/>
            <person name="Martins N."/>
            <person name="Menard M."/>
            <person name="Oztas S."/>
            <person name="Ratcliffe A."/>
            <person name="Shaffer T."/>
            <person name="Trask B."/>
            <person name="Vacherie B."/>
            <person name="Bellemere C."/>
            <person name="Belser C."/>
            <person name="Besnard-Gonnet M."/>
            <person name="Bartol-Mavel D."/>
            <person name="Boutard M."/>
            <person name="Briez-Silla S."/>
            <person name="Combette S."/>
            <person name="Dufosse-Laurent V."/>
            <person name="Ferron C."/>
            <person name="Lechaplais C."/>
            <person name="Louesse C."/>
            <person name="Muselet D."/>
            <person name="Magdelenat G."/>
            <person name="Pateau E."/>
            <person name="Petit E."/>
            <person name="Sirvain-Trukniewicz P."/>
            <person name="Trybou A."/>
            <person name="Vega-Czarny N."/>
            <person name="Bataille E."/>
            <person name="Bluet E."/>
            <person name="Bordelais I."/>
            <person name="Dubois M."/>
            <person name="Dumont C."/>
            <person name="Guerin T."/>
            <person name="Haffray S."/>
            <person name="Hammadi R."/>
            <person name="Muanga J."/>
            <person name="Pellouin V."/>
            <person name="Robert D."/>
            <person name="Wunderle E."/>
            <person name="Gauguet G."/>
            <person name="Roy A."/>
            <person name="Sainte-Marthe L."/>
            <person name="Verdier J."/>
            <person name="Verdier-Discala C."/>
            <person name="Hillier L.W."/>
            <person name="Fulton L."/>
            <person name="McPherson J."/>
            <person name="Matsuda F."/>
            <person name="Wilson R."/>
            <person name="Scarpelli C."/>
            <person name="Gyapay G."/>
            <person name="Wincker P."/>
            <person name="Saurin W."/>
            <person name="Quetier F."/>
            <person name="Waterston R."/>
            <person name="Hood L."/>
            <person name="Weissenbach J."/>
        </authorList>
    </citation>
    <scope>NUCLEOTIDE SEQUENCE [LARGE SCALE GENOMIC DNA]</scope>
</reference>
<reference key="7">
    <citation type="submission" date="2012-08" db="EMBL/GenBank/DDBJ databases">
        <authorList>
            <person name="Mural R.J."/>
            <person name="Istrail S."/>
            <person name="Sutton G.G."/>
            <person name="Florea L."/>
            <person name="Halpern A.L."/>
            <person name="Mobarry C.M."/>
            <person name="Lippert R."/>
            <person name="Walenz B."/>
            <person name="Shatkay H."/>
            <person name="Dew I."/>
            <person name="Miller J.R."/>
            <person name="Flanigan M.J."/>
            <person name="Edwards N.J."/>
            <person name="Bolanos R."/>
            <person name="Fasulo D."/>
            <person name="Halldorsson B.V."/>
            <person name="Hannenhalli S."/>
            <person name="Turner R."/>
            <person name="Yooseph S."/>
            <person name="Lu F."/>
            <person name="Nusskern D.R."/>
            <person name="Shue B.C."/>
            <person name="Zheng X.H."/>
            <person name="Zhong F."/>
            <person name="Delcher A.L."/>
            <person name="Huson D.H."/>
            <person name="Kravitz S.A."/>
            <person name="Mouchard L."/>
            <person name="Reinert K."/>
            <person name="Remington K.A."/>
            <person name="Clark A.G."/>
            <person name="Waterman M.S."/>
            <person name="Eichler E.E."/>
            <person name="Adams M.D."/>
            <person name="Hunkapiller M.W."/>
            <person name="Myers E.W."/>
            <person name="Venter J.C."/>
        </authorList>
    </citation>
    <scope>NUCLEOTIDE SEQUENCE [LARGE SCALE GENOMIC DNA]</scope>
</reference>
<reference key="8">
    <citation type="journal article" date="2004" name="Genome Res.">
        <title>The status, quality, and expansion of the NIH full-length cDNA project: the Mammalian Gene Collection (MGC).</title>
        <authorList>
            <consortium name="The MGC Project Team"/>
        </authorList>
    </citation>
    <scope>NUCLEOTIDE SEQUENCE [LARGE SCALE MRNA] (ISOFORMS 1 AND 3)</scope>
    <source>
        <tissue>Eye</tissue>
        <tissue>Melanoma</tissue>
    </source>
</reference>
<reference key="9">
    <citation type="journal article" date="2004" name="Proc. Natl. Acad. Sci. U.S.A.">
        <title>Large-scale cDNA transfection screening for genes related to cancer development and progression.</title>
        <authorList>
            <person name="Wan D."/>
            <person name="Gong Y."/>
            <person name="Qin W."/>
            <person name="Zhang P."/>
            <person name="Li J."/>
            <person name="Wei L."/>
            <person name="Zhou X."/>
            <person name="Li H."/>
            <person name="Qiu X."/>
            <person name="Zhong F."/>
            <person name="He L."/>
            <person name="Yu J."/>
            <person name="Yao G."/>
            <person name="Jiang H."/>
            <person name="Qian L."/>
            <person name="Yu Y."/>
            <person name="Shu H."/>
            <person name="Chen X."/>
            <person name="Xu H."/>
            <person name="Guo M."/>
            <person name="Pan Z."/>
            <person name="Chen Y."/>
            <person name="Ge C."/>
            <person name="Yang S."/>
            <person name="Gu J."/>
        </authorList>
    </citation>
    <scope>NUCLEOTIDE SEQUENCE [LARGE SCALE MRNA] OF 372-777 (ISOFORM 1)</scope>
</reference>
<reference key="10">
    <citation type="journal article" date="2012" name="Biochim. Biophys. Acta">
        <title>TRIM13 regulates ER stress induced autophagy and clonogenic ability of the cells.</title>
        <authorList>
            <person name="Tomar D."/>
            <person name="Singh R."/>
            <person name="Singh A.K."/>
            <person name="Pandya C.D."/>
            <person name="Singh R."/>
        </authorList>
    </citation>
    <scope>SUBCELLULAR LOCATION</scope>
</reference>
<reference key="11">
    <citation type="journal article" date="2015" name="Biomed. Res.">
        <title>Cellular localization and tissue distribution of endogenous DFCP1 protein.</title>
        <authorList>
            <person name="Nanao T."/>
            <person name="Koike M."/>
            <person name="Yamaguchi J."/>
            <person name="Sasaki M."/>
            <person name="Uchiyama Y."/>
        </authorList>
    </citation>
    <scope>SUBCELLULAR LOCATION</scope>
</reference>
<reference key="12">
    <citation type="journal article" date="2019" name="Cell Biol. Int.">
        <title>DFCP1 associates with lipid droplets.</title>
        <authorList>
            <person name="Gao G."/>
            <person name="Sheng Y."/>
            <person name="Yang H."/>
            <person name="Chua B.T."/>
            <person name="Xu L."/>
        </authorList>
    </citation>
    <scope>FUNCTION</scope>
    <scope>SUBCELLULAR LOCATION</scope>
    <scope>MUTAGENESIS OF CYS-654 AND CYS-770</scope>
    <scope>INTERACTION WITH RAB18</scope>
</reference>
<reference key="13">
    <citation type="journal article" date="2019" name="Cell Rep.">
        <title>The ER-Localized Protein DFCP1 Modulates ER-Lipid Droplet Contact Formation.</title>
        <authorList>
            <person name="Li D."/>
            <person name="Zhao Y.G."/>
            <person name="Li D."/>
            <person name="Zhao H."/>
            <person name="Huang J."/>
            <person name="Miao G."/>
            <person name="Feng D."/>
            <person name="Liu P."/>
            <person name="Li D."/>
            <person name="Zhang H."/>
        </authorList>
    </citation>
    <scope>FUNCTION</scope>
    <scope>SUBCELLULAR LOCATION</scope>
    <scope>INTERACTION WITH RAB18; BSCL2 AND ZW10</scope>
    <scope>MUTAGENESIS OF TRP-543; CYS-654 AND CYS-770</scope>
</reference>
<reference key="14">
    <citation type="journal article" date="2021" name="Autophagy">
        <title>Mammalian BCAS3 and C16orf70 associate with the phagophore assembly site in response to selective and non-selective autophagy.</title>
        <authorList>
            <person name="Kojima W."/>
            <person name="Yamano K."/>
            <person name="Kosako H."/>
            <person name="Imai K."/>
            <person name="Kikuchi R."/>
            <person name="Tanaka K."/>
            <person name="Matsuda N."/>
        </authorList>
    </citation>
    <scope>FUNCTION</scope>
    <scope>SUBCELLULAR LOCATION</scope>
</reference>
<reference key="15">
    <citation type="journal article" date="2022" name="Nature">
        <title>The role of NSP6 in the biogenesis of the SARS-CoV-2 replication organelle.</title>
        <authorList>
            <person name="Ricciardi S."/>
            <person name="Guarino A.M."/>
            <person name="Giaquinto L."/>
            <person name="Polishchuk E.V."/>
            <person name="Santoro M."/>
            <person name="Di Tullio G."/>
            <person name="Wilson C."/>
            <person name="Panariello F."/>
            <person name="Soares V.C."/>
            <person name="Dias S.S.G."/>
            <person name="Santos J.C."/>
            <person name="Souza T.M.L."/>
            <person name="Fusco G."/>
            <person name="Viscardi M."/>
            <person name="Brandi S."/>
            <person name="Bozza P.T."/>
            <person name="Polishchuk R.S."/>
            <person name="Venditti R."/>
            <person name="De Matteis M.A."/>
        </authorList>
    </citation>
    <scope>FUNCTION (MICROBIAL INFECTION)</scope>
    <scope>INTERACTION WITH SARS-COV-2 NON-STRUCTURAL PROTEIN 6 (MICROBIAL INFECTION)</scope>
</reference>
<gene>
    <name type="primary">ZFYVE1</name>
    <name type="synonym">DFCP1</name>
    <name type="synonym">KIAA1589</name>
    <name type="synonym">TAFF1</name>
    <name type="synonym">ZNFN2A1</name>
    <name type="ORF">PP10436</name>
</gene>
<accession>Q9HBF4</accession>
<accession>J3KNL9</accession>
<accession>Q8WYX7</accession>
<accession>Q96K57</accession>
<accession>Q9BXP9</accession>
<accession>Q9HCI3</accession>
<sequence>MSAQTSPAEKGLNPGLMCQESYACSGTDEAIFECDECCSLQCLRCEEELHRQERLRNHERIRLKPGHVPYCDLCKGLSGHLPGVRQRAIVRCQTCKINLCLECQKRTHSGGNKRRHPVTVYNVSNLQESLEAEEMDEETKRKKMTEKVVSFLLVDENEEIQVTNEEDFIRKLDCKPDQHLKVVSIFGNTGDGKSHTLNHTFFYGREVFKTSPTQESCTVGVWAAYDPVHKVAVIDTEGLLGATVNLSQRTRLLLKVLAISDLVIYRTHADRLHNDLFKFLGDASEAYLKHFTKELKATTARCGLDVPLSTLGPAVIIFHETVHTQLLGSDHPSEVPEKLIQDRFRKLGRFPEAFSSIHYKGTRTYNPPTDFSGLRRALEQLLENNTTRSPRHPGVIFKALKALSDRFSGEIPDDQMAHSSFFPDEYFTCSSLCLSCGVGCKKSMNHGKEGVPHEAKSRCRYSHQYDNRVYTCKACYERGEEVSVVPKTSASTDSPWMGLAKYAWSGYVIECPNCGVVYRSRQYWFGNQDPVDTVVRTEIVHVWPGTDGFLKDNNNAAQRLLDGMNFMAQSVSELSLGPTKAVTSWLTDQIAPAYWRPNSQILSCNKCATSFKDNDTKHHCRACGEGFCDSCSSKTRPVPERGWGPAPVRVCDNCYEARNVQLAVTEAQVDDEGGTLIARKVGEAVQNTLGAVVTAIDIPLGLVKDAARPAYWVPDHEILHCHNCRKEFSIKLSKHHCRACGQGFCDECSHDRRAVPSRGWDHPVRVCFNCNKKPGDL</sequence>
<evidence type="ECO:0000255" key="1">
    <source>
        <dbReference type="PROSITE-ProRule" id="PRU00091"/>
    </source>
</evidence>
<evidence type="ECO:0000269" key="2">
    <source>
    </source>
</evidence>
<evidence type="ECO:0000269" key="3">
    <source>
    </source>
</evidence>
<evidence type="ECO:0000269" key="4">
    <source>
    </source>
</evidence>
<evidence type="ECO:0000269" key="5">
    <source>
    </source>
</evidence>
<evidence type="ECO:0000269" key="6">
    <source>
    </source>
</evidence>
<evidence type="ECO:0000269" key="7">
    <source>
    </source>
</evidence>
<evidence type="ECO:0000269" key="8">
    <source>
    </source>
</evidence>
<evidence type="ECO:0000269" key="9">
    <source>
    </source>
</evidence>
<evidence type="ECO:0000269" key="10">
    <source>
    </source>
</evidence>
<evidence type="ECO:0000303" key="11">
    <source>
    </source>
</evidence>
<evidence type="ECO:0000303" key="12">
    <source>
    </source>
</evidence>
<evidence type="ECO:0000305" key="13"/>
<name>ZFYV1_HUMAN</name>
<organism>
    <name type="scientific">Homo sapiens</name>
    <name type="common">Human</name>
    <dbReference type="NCBI Taxonomy" id="9606"/>
    <lineage>
        <taxon>Eukaryota</taxon>
        <taxon>Metazoa</taxon>
        <taxon>Chordata</taxon>
        <taxon>Craniata</taxon>
        <taxon>Vertebrata</taxon>
        <taxon>Euteleostomi</taxon>
        <taxon>Mammalia</taxon>
        <taxon>Eutheria</taxon>
        <taxon>Euarchontoglires</taxon>
        <taxon>Primates</taxon>
        <taxon>Haplorrhini</taxon>
        <taxon>Catarrhini</taxon>
        <taxon>Hominidae</taxon>
        <taxon>Homo</taxon>
    </lineage>
</organism>
<protein>
    <recommendedName>
        <fullName>Zinc finger FYVE domain-containing protein 1</fullName>
    </recommendedName>
    <alternativeName>
        <fullName>Double FYVE-containing protein 1</fullName>
    </alternativeName>
    <alternativeName>
        <fullName>SR3</fullName>
    </alternativeName>
    <alternativeName>
        <fullName>Tandem FYVE fingers-1</fullName>
    </alternativeName>
</protein>
<comment type="function">
    <text evidence="3 4 7 8">Plays a role in the formation of lipid droplets (LDs) which are storage organelles at the center of lipid and energy homeostasis (PubMed:30970241). Regulates the morphology, size and distribution of LDs (PubMed:30970241, PubMed:31293035). Mediates the formation of endoplasmic reticulum-lipid droplets (ER-LD) contacts by forming a complex with RAB18 and ZW10 (PubMed:30970241). Binds to phosphatidylinositol 3-phosphate (PtdIns3P) through FYVE-type zinc finger (PubMed:11256955, PubMed:11739631).</text>
</comment>
<comment type="function">
    <text evidence="10">(Microbial infection) Upon SARS coronavirus-2/SARS-CoV-2 infection, mediates through binding with non-structural protein 6 (nsp6) the replication organelle-lipid droplet association required to sustain viral replication.</text>
</comment>
<comment type="subunit">
    <text evidence="7 8">Interacts with RAB18 (in GTP-bound form) (PubMed:30970241, PubMed:31293035). Interacts with BSCL2 in a RAB18-dependent manner (PubMed:30970241). Interacts with ZW10 (PubMed:30970241).</text>
</comment>
<comment type="subunit">
    <text evidence="10">(Microbial infection) Interacts with SARS coronavirus-2/SARS-CoV-2 non-structural protein 6 (nsp6); the interaction is independent of PtdIns3P-binding and leads to endoplasmic reticulum (ER) and double membrane vesicles (DMVs) binding to lipid droplets.</text>
</comment>
<comment type="interaction">
    <interactant intactId="EBI-4401611">
        <id>Q9HBF4</id>
    </interactant>
    <interactant intactId="EBI-746778">
        <id>Q96A72</id>
        <label>MAGOHB</label>
    </interactant>
    <organismsDiffer>false</organismsDiffer>
    <experiments>3</experiments>
</comment>
<comment type="interaction">
    <interactant intactId="EBI-4401611">
        <id>Q9HBF4</id>
    </interactant>
    <interactant intactId="EBI-357253">
        <id>P62136</id>
        <label>PPP1CA</label>
    </interactant>
    <organismsDiffer>false</organismsDiffer>
    <experiments>2</experiments>
</comment>
<comment type="subcellular location">
    <subcellularLocation>
        <location evidence="3">Golgi apparatus</location>
        <location evidence="3">Golgi stack</location>
    </subcellularLocation>
    <subcellularLocation>
        <location evidence="2 4 6">Golgi apparatus</location>
    </subcellularLocation>
    <subcellularLocation>
        <location evidence="2 5 6 7">Endoplasmic reticulum</location>
    </subcellularLocation>
    <subcellularLocation>
        <location evidence="7 8">Lipid droplet</location>
    </subcellularLocation>
    <subcellularLocation>
        <location evidence="6 8 9">Preautophagosomal structure</location>
    </subcellularLocation>
    <subcellularLocation>
        <location evidence="6">Mitochondrion</location>
    </subcellularLocation>
    <text evidence="3 5 7 8">Resides predominantly in the cisternal stacks of the Golgi (PubMed:11256955). Colocalizes with TRIM13 on the perinuclear endoplasmic reticulum (PubMed:22178386). During starvation conditions, localizes to omegasomes which are endoplasmic reticulum connected strutures at the origin of preautophagosomal structures (PubMed:25876663, PubMed:31293035). Localizes to lipid droplets in the presence of oleic acid (PubMed:30970241, PubMed:31293035).</text>
</comment>
<comment type="alternative products">
    <event type="alternative splicing"/>
    <isoform>
        <id>Q9HBF4-1</id>
        <name>1</name>
        <sequence type="displayed"/>
    </isoform>
    <isoform>
        <id>Q9HBF4-2</id>
        <name>2</name>
        <sequence type="described" ref="VSP_008007"/>
    </isoform>
    <isoform>
        <id>Q9HBF4-3</id>
        <name>3</name>
        <sequence type="described" ref="VSP_056770"/>
    </isoform>
</comment>
<comment type="tissue specificity">
    <molecule>Isoform 2</molecule>
    <text evidence="2 3">Highly expressed in heart. Also detected in the testis.</text>
</comment>
<comment type="tissue specificity">
    <molecule>Isoform 1</molecule>
    <text evidence="2 3">Expressed in all tissues examined, including, brain, placenta, lung, liver, skeletal muscle, pancreas and kidney. Highly expressed in heart.</text>
</comment>
<comment type="sequence caution" evidence="13">
    <conflict type="frameshift">
        <sequence resource="EMBL-CDS" id="AAL55826"/>
    </conflict>
</comment>
<comment type="sequence caution" evidence="13">
    <conflict type="erroneous initiation">
        <sequence resource="EMBL-CDS" id="BAB13415"/>
    </conflict>
    <text>Extended N-terminus.</text>
</comment>
<comment type="sequence caution" evidence="13">
    <conflict type="erroneous termination">
        <sequence resource="EMBL-CDS" id="BAB55085"/>
    </conflict>
    <text>Truncated C-terminus.</text>
</comment>
<dbReference type="EMBL" id="AF251025">
    <property type="protein sequence ID" value="AAG23748.1"/>
    <property type="molecule type" value="mRNA"/>
</dbReference>
<dbReference type="EMBL" id="AJ310569">
    <property type="protein sequence ID" value="CAC83950.1"/>
    <property type="molecule type" value="mRNA"/>
</dbReference>
<dbReference type="EMBL" id="AF311602">
    <property type="protein sequence ID" value="AAK27339.1"/>
    <property type="molecule type" value="mRNA"/>
</dbReference>
<dbReference type="EMBL" id="AB046809">
    <property type="protein sequence ID" value="BAB13415.1"/>
    <property type="status" value="ALT_INIT"/>
    <property type="molecule type" value="mRNA"/>
</dbReference>
<dbReference type="EMBL" id="AK027399">
    <property type="protein sequence ID" value="BAB55085.1"/>
    <property type="status" value="ALT_TERM"/>
    <property type="molecule type" value="mRNA"/>
</dbReference>
<dbReference type="EMBL" id="AL442663">
    <property type="status" value="NOT_ANNOTATED_CDS"/>
    <property type="molecule type" value="Genomic_DNA"/>
</dbReference>
<dbReference type="EMBL" id="CH471061">
    <property type="protein sequence ID" value="EAW81084.1"/>
    <property type="molecule type" value="Genomic_DNA"/>
</dbReference>
<dbReference type="EMBL" id="BC053520">
    <property type="protein sequence ID" value="AAH53520.1"/>
    <property type="molecule type" value="mRNA"/>
</dbReference>
<dbReference type="EMBL" id="BC014902">
    <property type="status" value="NOT_ANNOTATED_CDS"/>
    <property type="molecule type" value="mRNA"/>
</dbReference>
<dbReference type="EMBL" id="AF318319">
    <property type="protein sequence ID" value="AAL55826.1"/>
    <property type="status" value="ALT_FRAME"/>
    <property type="molecule type" value="mRNA"/>
</dbReference>
<dbReference type="CCDS" id="CCDS41969.1">
    <molecule id="Q9HBF4-2"/>
</dbReference>
<dbReference type="CCDS" id="CCDS61498.1">
    <molecule id="Q9HBF4-3"/>
</dbReference>
<dbReference type="CCDS" id="CCDS9811.1">
    <molecule id="Q9HBF4-1"/>
</dbReference>
<dbReference type="RefSeq" id="NP_001268663.1">
    <molecule id="Q9HBF4-3"/>
    <property type="nucleotide sequence ID" value="NM_001281734.2"/>
</dbReference>
<dbReference type="RefSeq" id="NP_001268664.1">
    <molecule id="Q9HBF4-2"/>
    <property type="nucleotide sequence ID" value="NM_001281735.1"/>
</dbReference>
<dbReference type="RefSeq" id="NP_067083.1">
    <molecule id="Q9HBF4-1"/>
    <property type="nucleotide sequence ID" value="NM_021260.4"/>
</dbReference>
<dbReference type="RefSeq" id="NP_848535.1">
    <molecule id="Q9HBF4-2"/>
    <property type="nucleotide sequence ID" value="NM_178441.2"/>
</dbReference>
<dbReference type="RefSeq" id="XP_016876862.1">
    <molecule id="Q9HBF4-2"/>
    <property type="nucleotide sequence ID" value="XM_017021373.2"/>
</dbReference>
<dbReference type="RefSeq" id="XP_047287438.1">
    <molecule id="Q9HBF4-2"/>
    <property type="nucleotide sequence ID" value="XM_047431482.1"/>
</dbReference>
<dbReference type="RefSeq" id="XP_054232201.1">
    <molecule id="Q9HBF4-2"/>
    <property type="nucleotide sequence ID" value="XM_054376226.1"/>
</dbReference>
<dbReference type="RefSeq" id="XP_054232202.1">
    <molecule id="Q9HBF4-2"/>
    <property type="nucleotide sequence ID" value="XM_054376227.1"/>
</dbReference>
<dbReference type="BioGRID" id="119749">
    <property type="interactions" value="57"/>
</dbReference>
<dbReference type="FunCoup" id="Q9HBF4">
    <property type="interactions" value="1816"/>
</dbReference>
<dbReference type="IntAct" id="Q9HBF4">
    <property type="interactions" value="16"/>
</dbReference>
<dbReference type="MINT" id="Q9HBF4"/>
<dbReference type="STRING" id="9606.ENSP00000450742"/>
<dbReference type="GlyGen" id="Q9HBF4">
    <property type="glycosylation" value="3 sites, 1 O-linked glycan (3 sites)"/>
</dbReference>
<dbReference type="iPTMnet" id="Q9HBF4"/>
<dbReference type="PhosphoSitePlus" id="Q9HBF4"/>
<dbReference type="SwissPalm" id="Q9HBF4"/>
<dbReference type="BioMuta" id="ZFYVE1"/>
<dbReference type="DMDM" id="34098716"/>
<dbReference type="jPOST" id="Q9HBF4"/>
<dbReference type="MassIVE" id="Q9HBF4"/>
<dbReference type="PaxDb" id="9606-ENSP00000450742"/>
<dbReference type="PeptideAtlas" id="Q9HBF4"/>
<dbReference type="ProteomicsDB" id="81536">
    <molecule id="Q9HBF4-1"/>
</dbReference>
<dbReference type="ProteomicsDB" id="81537">
    <molecule id="Q9HBF4-2"/>
</dbReference>
<dbReference type="Pumba" id="Q9HBF4"/>
<dbReference type="Antibodypedia" id="143">
    <property type="antibodies" value="188 antibodies from 22 providers"/>
</dbReference>
<dbReference type="DNASU" id="53349"/>
<dbReference type="Ensembl" id="ENST00000318876.9">
    <molecule id="Q9HBF4-3"/>
    <property type="protein sequence ID" value="ENSP00000326921.5"/>
    <property type="gene ID" value="ENSG00000165861.14"/>
</dbReference>
<dbReference type="Ensembl" id="ENST00000394207.6">
    <molecule id="Q9HBF4-2"/>
    <property type="protein sequence ID" value="ENSP00000377757.2"/>
    <property type="gene ID" value="ENSG00000165861.14"/>
</dbReference>
<dbReference type="Ensembl" id="ENST00000555072.1">
    <molecule id="Q9HBF4-2"/>
    <property type="protein sequence ID" value="ENSP00000452232.1"/>
    <property type="gene ID" value="ENSG00000165861.14"/>
</dbReference>
<dbReference type="Ensembl" id="ENST00000556143.6">
    <molecule id="Q9HBF4-1"/>
    <property type="protein sequence ID" value="ENSP00000450742.1"/>
    <property type="gene ID" value="ENSG00000165861.14"/>
</dbReference>
<dbReference type="GeneID" id="53349"/>
<dbReference type="KEGG" id="hsa:53349"/>
<dbReference type="MANE-Select" id="ENST00000556143.6">
    <property type="protein sequence ID" value="ENSP00000450742.1"/>
    <property type="RefSeq nucleotide sequence ID" value="NM_021260.4"/>
    <property type="RefSeq protein sequence ID" value="NP_067083.1"/>
</dbReference>
<dbReference type="UCSC" id="uc001xnl.5">
    <molecule id="Q9HBF4-1"/>
    <property type="organism name" value="human"/>
</dbReference>
<dbReference type="AGR" id="HGNC:13180"/>
<dbReference type="CTD" id="53349"/>
<dbReference type="DisGeNET" id="53349"/>
<dbReference type="GeneCards" id="ZFYVE1"/>
<dbReference type="HGNC" id="HGNC:13180">
    <property type="gene designation" value="ZFYVE1"/>
</dbReference>
<dbReference type="HPA" id="ENSG00000165861">
    <property type="expression patterns" value="Low tissue specificity"/>
</dbReference>
<dbReference type="MIM" id="605471">
    <property type="type" value="gene"/>
</dbReference>
<dbReference type="neXtProt" id="NX_Q9HBF4"/>
<dbReference type="OpenTargets" id="ENSG00000165861"/>
<dbReference type="PharmGKB" id="PA37752"/>
<dbReference type="VEuPathDB" id="HostDB:ENSG00000165861"/>
<dbReference type="eggNOG" id="KOG1818">
    <property type="taxonomic scope" value="Eukaryota"/>
</dbReference>
<dbReference type="GeneTree" id="ENSGT00390000016097"/>
<dbReference type="HOGENOM" id="CLU_020922_0_0_1"/>
<dbReference type="InParanoid" id="Q9HBF4"/>
<dbReference type="OrthoDB" id="68108at2759"/>
<dbReference type="PAN-GO" id="Q9HBF4">
    <property type="GO annotations" value="6 GO annotations based on evolutionary models"/>
</dbReference>
<dbReference type="PhylomeDB" id="Q9HBF4"/>
<dbReference type="TreeFam" id="TF323237"/>
<dbReference type="PathwayCommons" id="Q9HBF4"/>
<dbReference type="SignaLink" id="Q9HBF4"/>
<dbReference type="SIGNOR" id="Q9HBF4"/>
<dbReference type="BioGRID-ORCS" id="53349">
    <property type="hits" value="13 hits in 1165 CRISPR screens"/>
</dbReference>
<dbReference type="ChiTaRS" id="ZFYVE1">
    <property type="organism name" value="human"/>
</dbReference>
<dbReference type="GeneWiki" id="ZFYVE1"/>
<dbReference type="GenomeRNAi" id="53349"/>
<dbReference type="Pharos" id="Q9HBF4">
    <property type="development level" value="Tbio"/>
</dbReference>
<dbReference type="PRO" id="PR:Q9HBF4"/>
<dbReference type="Proteomes" id="UP000005640">
    <property type="component" value="Chromosome 14"/>
</dbReference>
<dbReference type="RNAct" id="Q9HBF4">
    <property type="molecule type" value="protein"/>
</dbReference>
<dbReference type="Bgee" id="ENSG00000165861">
    <property type="expression patterns" value="Expressed in tibialis anterior and 194 other cell types or tissues"/>
</dbReference>
<dbReference type="ExpressionAtlas" id="Q9HBF4">
    <property type="expression patterns" value="baseline and differential"/>
</dbReference>
<dbReference type="GO" id="GO:0005776">
    <property type="term" value="C:autophagosome"/>
    <property type="evidence" value="ECO:0000314"/>
    <property type="project" value="MGI"/>
</dbReference>
<dbReference type="GO" id="GO:0005783">
    <property type="term" value="C:endoplasmic reticulum"/>
    <property type="evidence" value="ECO:0000314"/>
    <property type="project" value="HPA"/>
</dbReference>
<dbReference type="GO" id="GO:0005789">
    <property type="term" value="C:endoplasmic reticulum membrane"/>
    <property type="evidence" value="ECO:0000314"/>
    <property type="project" value="UniProtKB"/>
</dbReference>
<dbReference type="GO" id="GO:0097629">
    <property type="term" value="C:extrinsic component of omegasome membrane"/>
    <property type="evidence" value="ECO:0000314"/>
    <property type="project" value="UniProtKB"/>
</dbReference>
<dbReference type="GO" id="GO:0005794">
    <property type="term" value="C:Golgi apparatus"/>
    <property type="evidence" value="ECO:0000314"/>
    <property type="project" value="UniProtKB"/>
</dbReference>
<dbReference type="GO" id="GO:0005795">
    <property type="term" value="C:Golgi stack"/>
    <property type="evidence" value="ECO:0000314"/>
    <property type="project" value="UniProtKB"/>
</dbReference>
<dbReference type="GO" id="GO:0005811">
    <property type="term" value="C:lipid droplet"/>
    <property type="evidence" value="ECO:0000314"/>
    <property type="project" value="UniProtKB"/>
</dbReference>
<dbReference type="GO" id="GO:0044233">
    <property type="term" value="C:mitochondria-associated endoplasmic reticulum membrane contact site"/>
    <property type="evidence" value="ECO:0000314"/>
    <property type="project" value="MGI"/>
</dbReference>
<dbReference type="GO" id="GO:0005739">
    <property type="term" value="C:mitochondrion"/>
    <property type="evidence" value="ECO:0000314"/>
    <property type="project" value="UniProtKB"/>
</dbReference>
<dbReference type="GO" id="GO:1990462">
    <property type="term" value="C:omegasome"/>
    <property type="evidence" value="ECO:0000314"/>
    <property type="project" value="UniProtKB"/>
</dbReference>
<dbReference type="GO" id="GO:0048471">
    <property type="term" value="C:perinuclear region of cytoplasm"/>
    <property type="evidence" value="ECO:0000314"/>
    <property type="project" value="UniProtKB"/>
</dbReference>
<dbReference type="GO" id="GO:0000407">
    <property type="term" value="C:phagophore assembly site"/>
    <property type="evidence" value="ECO:0000314"/>
    <property type="project" value="UniProtKB"/>
</dbReference>
<dbReference type="GO" id="GO:0005545">
    <property type="term" value="F:1-phosphatidylinositol binding"/>
    <property type="evidence" value="ECO:0000314"/>
    <property type="project" value="UniProtKB"/>
</dbReference>
<dbReference type="GO" id="GO:0005547">
    <property type="term" value="F:phosphatidylinositol-3,4,5-trisphosphate binding"/>
    <property type="evidence" value="ECO:0000314"/>
    <property type="project" value="UniProtKB"/>
</dbReference>
<dbReference type="GO" id="GO:0043325">
    <property type="term" value="F:phosphatidylinositol-3,4-bisphosphate binding"/>
    <property type="evidence" value="ECO:0000314"/>
    <property type="project" value="UniProtKB"/>
</dbReference>
<dbReference type="GO" id="GO:0032266">
    <property type="term" value="F:phosphatidylinositol-3-phosphate binding"/>
    <property type="evidence" value="ECO:0000314"/>
    <property type="project" value="UniProtKB"/>
</dbReference>
<dbReference type="GO" id="GO:0008270">
    <property type="term" value="F:zinc ion binding"/>
    <property type="evidence" value="ECO:0000303"/>
    <property type="project" value="UniProtKB"/>
</dbReference>
<dbReference type="GO" id="GO:0009267">
    <property type="term" value="P:cellular response to starvation"/>
    <property type="evidence" value="ECO:0000314"/>
    <property type="project" value="ParkinsonsUK-UCL"/>
</dbReference>
<dbReference type="GO" id="GO:0140042">
    <property type="term" value="P:lipid droplet formation"/>
    <property type="evidence" value="ECO:0000315"/>
    <property type="project" value="UniProtKB"/>
</dbReference>
<dbReference type="GO" id="GO:0016236">
    <property type="term" value="P:macroautophagy"/>
    <property type="evidence" value="ECO:0000314"/>
    <property type="project" value="ParkinsonsUK-UCL"/>
</dbReference>
<dbReference type="GO" id="GO:0044829">
    <property type="term" value="P:positive regulation by host of viral genome replication"/>
    <property type="evidence" value="ECO:0000314"/>
    <property type="project" value="UniProtKB"/>
</dbReference>
<dbReference type="CDD" id="cd19819">
    <property type="entry name" value="Bbox1_ZFYVE1_rpt1"/>
    <property type="match status" value="1"/>
</dbReference>
<dbReference type="CDD" id="cd19820">
    <property type="entry name" value="Bbox1_ZFYVE1_rpt2"/>
    <property type="match status" value="1"/>
</dbReference>
<dbReference type="CDD" id="cd15734">
    <property type="entry name" value="FYVE_ZFYV1"/>
    <property type="match status" value="1"/>
</dbReference>
<dbReference type="CDD" id="cd01851">
    <property type="entry name" value="GBP"/>
    <property type="match status" value="1"/>
</dbReference>
<dbReference type="FunFam" id="3.30.40.10:FF:000109">
    <property type="entry name" value="Zinc finger FYVE domain-containing protein 1"/>
    <property type="match status" value="2"/>
</dbReference>
<dbReference type="FunFam" id="3.40.50.300:FF:000719">
    <property type="entry name" value="Zinc finger FYVE domain-containing protein 1"/>
    <property type="match status" value="1"/>
</dbReference>
<dbReference type="Gene3D" id="3.40.50.300">
    <property type="entry name" value="P-loop containing nucleotide triphosphate hydrolases"/>
    <property type="match status" value="1"/>
</dbReference>
<dbReference type="Gene3D" id="3.30.40.10">
    <property type="entry name" value="Zinc/RING finger domain, C3HC4 (zinc finger)"/>
    <property type="match status" value="2"/>
</dbReference>
<dbReference type="InterPro" id="IPR027417">
    <property type="entry name" value="P-loop_NTPase"/>
</dbReference>
<dbReference type="InterPro" id="IPR042427">
    <property type="entry name" value="ZFYV1"/>
</dbReference>
<dbReference type="InterPro" id="IPR047856">
    <property type="entry name" value="ZFYVE1_first_BBox1"/>
</dbReference>
<dbReference type="InterPro" id="IPR047855">
    <property type="entry name" value="ZFYVE1_second_BBox1"/>
</dbReference>
<dbReference type="InterPro" id="IPR000306">
    <property type="entry name" value="Znf_FYVE"/>
</dbReference>
<dbReference type="InterPro" id="IPR017455">
    <property type="entry name" value="Znf_FYVE-rel"/>
</dbReference>
<dbReference type="InterPro" id="IPR011011">
    <property type="entry name" value="Znf_FYVE_PHD"/>
</dbReference>
<dbReference type="InterPro" id="IPR013083">
    <property type="entry name" value="Znf_RING/FYVE/PHD"/>
</dbReference>
<dbReference type="PANTHER" id="PTHR46624">
    <property type="entry name" value="AGAP002036-PA"/>
    <property type="match status" value="1"/>
</dbReference>
<dbReference type="PANTHER" id="PTHR46624:SF3">
    <property type="entry name" value="ZINC FINGER FYVE DOMAIN-CONTAINING PROTEIN 1"/>
    <property type="match status" value="1"/>
</dbReference>
<dbReference type="Pfam" id="PF22586">
    <property type="entry name" value="ANCHR-like_BBOX"/>
    <property type="match status" value="1"/>
</dbReference>
<dbReference type="Pfam" id="PF01363">
    <property type="entry name" value="FYVE"/>
    <property type="match status" value="2"/>
</dbReference>
<dbReference type="SMART" id="SM00064">
    <property type="entry name" value="FYVE"/>
    <property type="match status" value="2"/>
</dbReference>
<dbReference type="SUPFAM" id="SSF57903">
    <property type="entry name" value="FYVE/PHD zinc finger"/>
    <property type="match status" value="2"/>
</dbReference>
<dbReference type="SUPFAM" id="SSF52540">
    <property type="entry name" value="P-loop containing nucleoside triphosphate hydrolases"/>
    <property type="match status" value="1"/>
</dbReference>
<dbReference type="PROSITE" id="PS50178">
    <property type="entry name" value="ZF_FYVE"/>
    <property type="match status" value="2"/>
</dbReference>